<keyword id="KW-1185">Reference proteome</keyword>
<comment type="similarity">
    <text evidence="1">Belongs to the DsrB family.</text>
</comment>
<organism>
    <name type="scientific">Shigella flexneri</name>
    <dbReference type="NCBI Taxonomy" id="623"/>
    <lineage>
        <taxon>Bacteria</taxon>
        <taxon>Pseudomonadati</taxon>
        <taxon>Pseudomonadota</taxon>
        <taxon>Gammaproteobacteria</taxon>
        <taxon>Enterobacterales</taxon>
        <taxon>Enterobacteriaceae</taxon>
        <taxon>Shigella</taxon>
    </lineage>
</organism>
<feature type="chain" id="PRO_0000201914" description="Protein DsrB">
    <location>
        <begin position="1"/>
        <end position="62"/>
    </location>
</feature>
<evidence type="ECO:0000255" key="1">
    <source>
        <dbReference type="HAMAP-Rule" id="MF_01549"/>
    </source>
</evidence>
<sequence>MKVNDRVTVKTDGGPRRPGVVLAVEEFSEGTMYLVALEDYPLGIWFFNEAGHQDGIFVEKAE</sequence>
<protein>
    <recommendedName>
        <fullName evidence="1">Protein DsrB</fullName>
    </recommendedName>
</protein>
<dbReference type="EMBL" id="AE005674">
    <property type="protein sequence ID" value="AAN43544.2"/>
    <property type="molecule type" value="Genomic_DNA"/>
</dbReference>
<dbReference type="EMBL" id="AE014073">
    <property type="protein sequence ID" value="AAP17370.1"/>
    <property type="molecule type" value="Genomic_DNA"/>
</dbReference>
<dbReference type="RefSeq" id="NP_707837.2">
    <property type="nucleotide sequence ID" value="NC_004337.2"/>
</dbReference>
<dbReference type="RefSeq" id="WP_000867216.1">
    <property type="nucleotide sequence ID" value="NZ_WPGW01000059.1"/>
</dbReference>
<dbReference type="SMR" id="Q83KN1"/>
<dbReference type="PaxDb" id="198214-SF1997"/>
<dbReference type="GeneID" id="1025210"/>
<dbReference type="KEGG" id="sfl:SF1997"/>
<dbReference type="KEGG" id="sfx:S2091"/>
<dbReference type="PATRIC" id="fig|198214.7.peg.2385"/>
<dbReference type="HOGENOM" id="CLU_189289_0_0_6"/>
<dbReference type="Proteomes" id="UP000001006">
    <property type="component" value="Chromosome"/>
</dbReference>
<dbReference type="Proteomes" id="UP000002673">
    <property type="component" value="Chromosome"/>
</dbReference>
<dbReference type="HAMAP" id="MF_01549">
    <property type="entry name" value="DsrB"/>
    <property type="match status" value="1"/>
</dbReference>
<dbReference type="InterPro" id="IPR019717">
    <property type="entry name" value="Dextransucrase_DSRB"/>
</dbReference>
<dbReference type="NCBIfam" id="NF007981">
    <property type="entry name" value="PRK10708.1"/>
    <property type="match status" value="1"/>
</dbReference>
<dbReference type="Pfam" id="PF10781">
    <property type="entry name" value="DSRB"/>
    <property type="match status" value="1"/>
</dbReference>
<name>DSRB_SHIFL</name>
<reference key="1">
    <citation type="journal article" date="2002" name="Nucleic Acids Res.">
        <title>Genome sequence of Shigella flexneri 2a: insights into pathogenicity through comparison with genomes of Escherichia coli K12 and O157.</title>
        <authorList>
            <person name="Jin Q."/>
            <person name="Yuan Z."/>
            <person name="Xu J."/>
            <person name="Wang Y."/>
            <person name="Shen Y."/>
            <person name="Lu W."/>
            <person name="Wang J."/>
            <person name="Liu H."/>
            <person name="Yang J."/>
            <person name="Yang F."/>
            <person name="Zhang X."/>
            <person name="Zhang J."/>
            <person name="Yang G."/>
            <person name="Wu H."/>
            <person name="Qu D."/>
            <person name="Dong J."/>
            <person name="Sun L."/>
            <person name="Xue Y."/>
            <person name="Zhao A."/>
            <person name="Gao Y."/>
            <person name="Zhu J."/>
            <person name="Kan B."/>
            <person name="Ding K."/>
            <person name="Chen S."/>
            <person name="Cheng H."/>
            <person name="Yao Z."/>
            <person name="He B."/>
            <person name="Chen R."/>
            <person name="Ma D."/>
            <person name="Qiang B."/>
            <person name="Wen Y."/>
            <person name="Hou Y."/>
            <person name="Yu J."/>
        </authorList>
    </citation>
    <scope>NUCLEOTIDE SEQUENCE [LARGE SCALE GENOMIC DNA]</scope>
    <source>
        <strain>301 / Serotype 2a</strain>
    </source>
</reference>
<reference key="2">
    <citation type="journal article" date="2003" name="Infect. Immun.">
        <title>Complete genome sequence and comparative genomics of Shigella flexneri serotype 2a strain 2457T.</title>
        <authorList>
            <person name="Wei J."/>
            <person name="Goldberg M.B."/>
            <person name="Burland V."/>
            <person name="Venkatesan M.M."/>
            <person name="Deng W."/>
            <person name="Fournier G."/>
            <person name="Mayhew G.F."/>
            <person name="Plunkett G. III"/>
            <person name="Rose D.J."/>
            <person name="Darling A."/>
            <person name="Mau B."/>
            <person name="Perna N.T."/>
            <person name="Payne S.M."/>
            <person name="Runyen-Janecky L.J."/>
            <person name="Zhou S."/>
            <person name="Schwartz D.C."/>
            <person name="Blattner F.R."/>
        </authorList>
    </citation>
    <scope>NUCLEOTIDE SEQUENCE [LARGE SCALE GENOMIC DNA]</scope>
    <source>
        <strain>ATCC 700930 / 2457T / Serotype 2a</strain>
    </source>
</reference>
<accession>Q83KN1</accession>
<accession>Q7UAA2</accession>
<proteinExistence type="inferred from homology"/>
<gene>
    <name evidence="1" type="primary">dsrB</name>
    <name type="ordered locus">SF1997</name>
    <name type="ordered locus">S2091</name>
</gene>